<keyword id="KW-0053">Apoptosis</keyword>
<keyword id="KW-0445">Lipid transport</keyword>
<keyword id="KW-0496">Mitochondrion</keyword>
<keyword id="KW-1185">Reference proteome</keyword>
<keyword id="KW-0809">Transit peptide</keyword>
<keyword id="KW-0813">Transport</keyword>
<evidence type="ECO:0000250" key="1">
    <source>
        <dbReference type="UniProtKB" id="Q9Y255"/>
    </source>
</evidence>
<evidence type="ECO:0000255" key="2">
    <source>
        <dbReference type="PROSITE-ProRule" id="PRU00158"/>
    </source>
</evidence>
<evidence type="ECO:0000269" key="3">
    <source>
    </source>
</evidence>
<evidence type="ECO:0000269" key="4">
    <source>
    </source>
</evidence>
<evidence type="ECO:0000305" key="5"/>
<sequence length="217" mass="24960">MVKYFLGQSVLRSSWDQVFAAFWQRYPNPYSKHVLTEDIVHREVTPDQKLLSRRLLTKTNRMPRWAERLFPANVAHSVYILEDSIVDPQNQTMTTFTWNINHARLMVVEERCVYCVNSDNSGWTEIRREAWVSSSLFGVSRAVQEFGLARFKSNVTKTMKGFEYILAKLQGEAPSKTLVETAKEAKEKAKETALAATEKAKDLANKAATKQQQRQLV</sequence>
<proteinExistence type="evidence at protein level"/>
<name>PRLD1_MOUSE</name>
<organism>
    <name type="scientific">Mus musculus</name>
    <name type="common">Mouse</name>
    <dbReference type="NCBI Taxonomy" id="10090"/>
    <lineage>
        <taxon>Eukaryota</taxon>
        <taxon>Metazoa</taxon>
        <taxon>Chordata</taxon>
        <taxon>Craniata</taxon>
        <taxon>Vertebrata</taxon>
        <taxon>Euteleostomi</taxon>
        <taxon>Mammalia</taxon>
        <taxon>Eutheria</taxon>
        <taxon>Euarchontoglires</taxon>
        <taxon>Glires</taxon>
        <taxon>Rodentia</taxon>
        <taxon>Myomorpha</taxon>
        <taxon>Muroidea</taxon>
        <taxon>Muridae</taxon>
        <taxon>Murinae</taxon>
        <taxon>Mus</taxon>
        <taxon>Mus</taxon>
    </lineage>
</organism>
<gene>
    <name type="primary">Prelid1</name>
    <name type="synonym">Preli</name>
</gene>
<reference key="1">
    <citation type="journal article" date="2004" name="Biochem. J.">
        <title>PRELI (protein of relevant evolutionary and lymphoid interest) is located within an evolutionarily conserved gene cluster on chromosome 5q34-q35 and encodes a novel mitochondrial protein.</title>
        <authorList>
            <person name="Fox E.J."/>
            <person name="Stubbs S.A."/>
            <person name="Kyaw Tun J."/>
            <person name="Leek J.P."/>
            <person name="Markham A.F."/>
            <person name="Wright S.C."/>
        </authorList>
    </citation>
    <scope>NUCLEOTIDE SEQUENCE [MRNA]</scope>
    <scope>SUBCELLULAR LOCATION</scope>
    <scope>TISSUE SPECIFICITY</scope>
</reference>
<reference key="2">
    <citation type="journal article" date="2005" name="Science">
        <title>The transcriptional landscape of the mammalian genome.</title>
        <authorList>
            <person name="Carninci P."/>
            <person name="Kasukawa T."/>
            <person name="Katayama S."/>
            <person name="Gough J."/>
            <person name="Frith M.C."/>
            <person name="Maeda N."/>
            <person name="Oyama R."/>
            <person name="Ravasi T."/>
            <person name="Lenhard B."/>
            <person name="Wells C."/>
            <person name="Kodzius R."/>
            <person name="Shimokawa K."/>
            <person name="Bajic V.B."/>
            <person name="Brenner S.E."/>
            <person name="Batalov S."/>
            <person name="Forrest A.R."/>
            <person name="Zavolan M."/>
            <person name="Davis M.J."/>
            <person name="Wilming L.G."/>
            <person name="Aidinis V."/>
            <person name="Allen J.E."/>
            <person name="Ambesi-Impiombato A."/>
            <person name="Apweiler R."/>
            <person name="Aturaliya R.N."/>
            <person name="Bailey T.L."/>
            <person name="Bansal M."/>
            <person name="Baxter L."/>
            <person name="Beisel K.W."/>
            <person name="Bersano T."/>
            <person name="Bono H."/>
            <person name="Chalk A.M."/>
            <person name="Chiu K.P."/>
            <person name="Choudhary V."/>
            <person name="Christoffels A."/>
            <person name="Clutterbuck D.R."/>
            <person name="Crowe M.L."/>
            <person name="Dalla E."/>
            <person name="Dalrymple B.P."/>
            <person name="de Bono B."/>
            <person name="Della Gatta G."/>
            <person name="di Bernardo D."/>
            <person name="Down T."/>
            <person name="Engstrom P."/>
            <person name="Fagiolini M."/>
            <person name="Faulkner G."/>
            <person name="Fletcher C.F."/>
            <person name="Fukushima T."/>
            <person name="Furuno M."/>
            <person name="Futaki S."/>
            <person name="Gariboldi M."/>
            <person name="Georgii-Hemming P."/>
            <person name="Gingeras T.R."/>
            <person name="Gojobori T."/>
            <person name="Green R.E."/>
            <person name="Gustincich S."/>
            <person name="Harbers M."/>
            <person name="Hayashi Y."/>
            <person name="Hensch T.K."/>
            <person name="Hirokawa N."/>
            <person name="Hill D."/>
            <person name="Huminiecki L."/>
            <person name="Iacono M."/>
            <person name="Ikeo K."/>
            <person name="Iwama A."/>
            <person name="Ishikawa T."/>
            <person name="Jakt M."/>
            <person name="Kanapin A."/>
            <person name="Katoh M."/>
            <person name="Kawasawa Y."/>
            <person name="Kelso J."/>
            <person name="Kitamura H."/>
            <person name="Kitano H."/>
            <person name="Kollias G."/>
            <person name="Krishnan S.P."/>
            <person name="Kruger A."/>
            <person name="Kummerfeld S.K."/>
            <person name="Kurochkin I.V."/>
            <person name="Lareau L.F."/>
            <person name="Lazarevic D."/>
            <person name="Lipovich L."/>
            <person name="Liu J."/>
            <person name="Liuni S."/>
            <person name="McWilliam S."/>
            <person name="Madan Babu M."/>
            <person name="Madera M."/>
            <person name="Marchionni L."/>
            <person name="Matsuda H."/>
            <person name="Matsuzawa S."/>
            <person name="Miki H."/>
            <person name="Mignone F."/>
            <person name="Miyake S."/>
            <person name="Morris K."/>
            <person name="Mottagui-Tabar S."/>
            <person name="Mulder N."/>
            <person name="Nakano N."/>
            <person name="Nakauchi H."/>
            <person name="Ng P."/>
            <person name="Nilsson R."/>
            <person name="Nishiguchi S."/>
            <person name="Nishikawa S."/>
            <person name="Nori F."/>
            <person name="Ohara O."/>
            <person name="Okazaki Y."/>
            <person name="Orlando V."/>
            <person name="Pang K.C."/>
            <person name="Pavan W.J."/>
            <person name="Pavesi G."/>
            <person name="Pesole G."/>
            <person name="Petrovsky N."/>
            <person name="Piazza S."/>
            <person name="Reed J."/>
            <person name="Reid J.F."/>
            <person name="Ring B.Z."/>
            <person name="Ringwald M."/>
            <person name="Rost B."/>
            <person name="Ruan Y."/>
            <person name="Salzberg S.L."/>
            <person name="Sandelin A."/>
            <person name="Schneider C."/>
            <person name="Schoenbach C."/>
            <person name="Sekiguchi K."/>
            <person name="Semple C.A."/>
            <person name="Seno S."/>
            <person name="Sessa L."/>
            <person name="Sheng Y."/>
            <person name="Shibata Y."/>
            <person name="Shimada H."/>
            <person name="Shimada K."/>
            <person name="Silva D."/>
            <person name="Sinclair B."/>
            <person name="Sperling S."/>
            <person name="Stupka E."/>
            <person name="Sugiura K."/>
            <person name="Sultana R."/>
            <person name="Takenaka Y."/>
            <person name="Taki K."/>
            <person name="Tammoja K."/>
            <person name="Tan S.L."/>
            <person name="Tang S."/>
            <person name="Taylor M.S."/>
            <person name="Tegner J."/>
            <person name="Teichmann S.A."/>
            <person name="Ueda H.R."/>
            <person name="van Nimwegen E."/>
            <person name="Verardo R."/>
            <person name="Wei C.L."/>
            <person name="Yagi K."/>
            <person name="Yamanishi H."/>
            <person name="Zabarovsky E."/>
            <person name="Zhu S."/>
            <person name="Zimmer A."/>
            <person name="Hide W."/>
            <person name="Bult C."/>
            <person name="Grimmond S.M."/>
            <person name="Teasdale R.D."/>
            <person name="Liu E.T."/>
            <person name="Brusic V."/>
            <person name="Quackenbush J."/>
            <person name="Wahlestedt C."/>
            <person name="Mattick J.S."/>
            <person name="Hume D.A."/>
            <person name="Kai C."/>
            <person name="Sasaki D."/>
            <person name="Tomaru Y."/>
            <person name="Fukuda S."/>
            <person name="Kanamori-Katayama M."/>
            <person name="Suzuki M."/>
            <person name="Aoki J."/>
            <person name="Arakawa T."/>
            <person name="Iida J."/>
            <person name="Imamura K."/>
            <person name="Itoh M."/>
            <person name="Kato T."/>
            <person name="Kawaji H."/>
            <person name="Kawagashira N."/>
            <person name="Kawashima T."/>
            <person name="Kojima M."/>
            <person name="Kondo S."/>
            <person name="Konno H."/>
            <person name="Nakano K."/>
            <person name="Ninomiya N."/>
            <person name="Nishio T."/>
            <person name="Okada M."/>
            <person name="Plessy C."/>
            <person name="Shibata K."/>
            <person name="Shiraki T."/>
            <person name="Suzuki S."/>
            <person name="Tagami M."/>
            <person name="Waki K."/>
            <person name="Watahiki A."/>
            <person name="Okamura-Oho Y."/>
            <person name="Suzuki H."/>
            <person name="Kawai J."/>
            <person name="Hayashizaki Y."/>
        </authorList>
    </citation>
    <scope>NUCLEOTIDE SEQUENCE [LARGE SCALE MRNA]</scope>
    <source>
        <strain>C57BL/6J</strain>
        <strain>NOD</strain>
        <tissue>Bone marrow macrophage</tissue>
        <tissue>Dendritic cell</tissue>
        <tissue>Embryo</tissue>
        <tissue>Embryonic stomach</tissue>
    </source>
</reference>
<reference key="3">
    <citation type="journal article" date="2004" name="Genome Res.">
        <title>The status, quality, and expansion of the NIH full-length cDNA project: the Mammalian Gene Collection (MGC).</title>
        <authorList>
            <consortium name="The MGC Project Team"/>
        </authorList>
    </citation>
    <scope>NUCLEOTIDE SEQUENCE [LARGE SCALE MRNA]</scope>
    <source>
        <strain>C57BL/6J</strain>
        <strain>Czech II</strain>
        <strain>FVB/N</strain>
        <tissue>Brain</tissue>
        <tissue>Lung tumor</tissue>
        <tissue>Mammary tumor</tissue>
    </source>
</reference>
<reference key="4">
    <citation type="journal article" date="2010" name="Cell">
        <title>A tissue-specific atlas of mouse protein phosphorylation and expression.</title>
        <authorList>
            <person name="Huttlin E.L."/>
            <person name="Jedrychowski M.P."/>
            <person name="Elias J.E."/>
            <person name="Goswami T."/>
            <person name="Rad R."/>
            <person name="Beausoleil S.A."/>
            <person name="Villen J."/>
            <person name="Haas W."/>
            <person name="Sowa M.E."/>
            <person name="Gygi S.P."/>
        </authorList>
    </citation>
    <scope>IDENTIFICATION BY MASS SPECTROMETRY [LARGE SCALE ANALYSIS]</scope>
    <source>
        <tissue>Brain</tissue>
        <tissue>Kidney</tissue>
    </source>
</reference>
<reference key="5">
    <citation type="journal article" date="2010" name="Cell Death Dis.">
        <title>Vital function of PRELI and essential requirement of its LEA motif.</title>
        <authorList>
            <person name="McKeller M.R."/>
            <person name="Herrera-Rodriguez S."/>
            <person name="Ma W."/>
            <person name="Ortiz-Quintero B."/>
            <person name="Rangel R."/>
            <person name="Cande C."/>
            <person name="Sims-Mourtada J.C."/>
            <person name="Melnikova V."/>
            <person name="Kashi C."/>
            <person name="Phan L.M."/>
            <person name="Chen Z."/>
            <person name="Huang P."/>
            <person name="Dunner K. Jr."/>
            <person name="Kroemer G."/>
            <person name="Singh K.K."/>
            <person name="Martinez-Valdez H."/>
        </authorList>
    </citation>
    <scope>FUNCTION</scope>
</reference>
<feature type="transit peptide" description="Mitochondrion" evidence="1">
    <location>
        <begin position="1"/>
        <end status="unknown"/>
    </location>
</feature>
<feature type="chain" id="PRO_0000097120" description="PRELI domain-containing protein 1, mitochondrial">
    <location>
        <begin status="unknown"/>
        <end position="217"/>
    </location>
</feature>
<feature type="domain" description="PRELI/MSF1" evidence="2">
    <location>
        <begin position="36"/>
        <end position="174"/>
    </location>
</feature>
<feature type="sequence conflict" description="In Ref. 2; BAE29582." evidence="5" ref="2">
    <original>V</original>
    <variation>L</variation>
    <location>
        <position position="40"/>
    </location>
</feature>
<protein>
    <recommendedName>
        <fullName>PRELI domain-containing protein 1, mitochondrial</fullName>
    </recommendedName>
    <alternativeName>
        <fullName>Px19-like protein</fullName>
    </alternativeName>
</protein>
<comment type="function">
    <text evidence="1 4">Involved in the modulation of the mitochondrial apoptotic pathway by ensuring the accumulation of cardiolipin (CL) in mitochondrial membranes. In vitro, the TRIAP1:PRELID1 complex mediates the transfer of phosphatidic acid (PA) between liposomes and probably functions as a PA transporter across the mitochondrion intermembrane space to provide PA for CL synthesis in the inner membrane. Regulates the mitochondrial apoptotic pathway in primary Th cells. Regulates Th cell differentiation by down-regulating STAT6 thereby reducing IL-4-induced Th2 cell number. May be important for the development of vital and immunocompetent organs (By similarity).</text>
</comment>
<comment type="catalytic activity">
    <reaction evidence="1">
        <text>a 1,2-diacyl-sn-glycero-3-phosphate(in) = a 1,2-diacyl-sn-glycero-3-phosphate(out)</text>
        <dbReference type="Rhea" id="RHEA:36435"/>
        <dbReference type="ChEBI" id="CHEBI:58608"/>
    </reaction>
</comment>
<comment type="subunit">
    <text evidence="1 4">Forms a complex with TRIAP1 in the mitochondrion intermembrane space. Interacts with OPA1 and AIFM1 (By similarity).</text>
</comment>
<comment type="subcellular location">
    <subcellularLocation>
        <location evidence="3">Mitochondrion</location>
    </subcellularLocation>
    <subcellularLocation>
        <location evidence="1">Mitochondrion intermembrane space</location>
    </subcellularLocation>
</comment>
<comment type="tissue specificity">
    <text evidence="3">Abundantly expressed in all tissues tested except testis with highest levels in thymus.</text>
</comment>
<dbReference type="EMBL" id="AK003629">
    <property type="protein sequence ID" value="BAB22898.2"/>
    <property type="molecule type" value="mRNA"/>
</dbReference>
<dbReference type="EMBL" id="AK146857">
    <property type="protein sequence ID" value="BAE27486.1"/>
    <property type="molecule type" value="mRNA"/>
</dbReference>
<dbReference type="EMBL" id="AK150465">
    <property type="protein sequence ID" value="BAE29582.1"/>
    <property type="molecule type" value="mRNA"/>
</dbReference>
<dbReference type="EMBL" id="AK151321">
    <property type="protein sequence ID" value="BAE30302.1"/>
    <property type="molecule type" value="mRNA"/>
</dbReference>
<dbReference type="EMBL" id="AK155042">
    <property type="protein sequence ID" value="BAE33009.1"/>
    <property type="molecule type" value="mRNA"/>
</dbReference>
<dbReference type="EMBL" id="BC024813">
    <property type="protein sequence ID" value="AAH24813.2"/>
    <property type="molecule type" value="mRNA"/>
</dbReference>
<dbReference type="EMBL" id="BC025859">
    <property type="protein sequence ID" value="AAH25859.1"/>
    <property type="molecule type" value="mRNA"/>
</dbReference>
<dbReference type="EMBL" id="BC098241">
    <property type="protein sequence ID" value="AAH98241.1"/>
    <property type="molecule type" value="mRNA"/>
</dbReference>
<dbReference type="CCDS" id="CCDS26542.1"/>
<dbReference type="RefSeq" id="NP_079872.4">
    <property type="nucleotide sequence ID" value="NM_025596.5"/>
</dbReference>
<dbReference type="SMR" id="Q8R107"/>
<dbReference type="FunCoup" id="Q8R107">
    <property type="interactions" value="2387"/>
</dbReference>
<dbReference type="STRING" id="10090.ENSMUSP00000021942"/>
<dbReference type="GlyGen" id="Q8R107">
    <property type="glycosylation" value="1 site, 1 O-linked glycan (1 site)"/>
</dbReference>
<dbReference type="iPTMnet" id="Q8R107"/>
<dbReference type="PhosphoSitePlus" id="Q8R107"/>
<dbReference type="PaxDb" id="10090-ENSMUSP00000021942"/>
<dbReference type="PeptideAtlas" id="Q8R107"/>
<dbReference type="ProteomicsDB" id="291813"/>
<dbReference type="Pumba" id="Q8R107"/>
<dbReference type="Antibodypedia" id="1204">
    <property type="antibodies" value="168 antibodies from 23 providers"/>
</dbReference>
<dbReference type="DNASU" id="66494"/>
<dbReference type="Ensembl" id="ENSMUST00000021942.8">
    <property type="protein sequence ID" value="ENSMUSP00000021942.7"/>
    <property type="gene ID" value="ENSMUSG00000021486.8"/>
</dbReference>
<dbReference type="GeneID" id="66494"/>
<dbReference type="KEGG" id="mmu:66494"/>
<dbReference type="UCSC" id="uc007qql.1">
    <property type="organism name" value="mouse"/>
</dbReference>
<dbReference type="AGR" id="MGI:1913744"/>
<dbReference type="CTD" id="27166"/>
<dbReference type="MGI" id="MGI:1913744">
    <property type="gene designation" value="Prelid1"/>
</dbReference>
<dbReference type="VEuPathDB" id="HostDB:ENSMUSG00000021486"/>
<dbReference type="eggNOG" id="KOG3337">
    <property type="taxonomic scope" value="Eukaryota"/>
</dbReference>
<dbReference type="GeneTree" id="ENSGT00950000182810"/>
<dbReference type="HOGENOM" id="CLU_067902_3_0_1"/>
<dbReference type="InParanoid" id="Q8R107"/>
<dbReference type="OMA" id="GYEFFKC"/>
<dbReference type="OrthoDB" id="341300at2759"/>
<dbReference type="PhylomeDB" id="Q8R107"/>
<dbReference type="TreeFam" id="TF313119"/>
<dbReference type="Reactome" id="R-MMU-6803204">
    <property type="pathway name" value="TP53 Regulates Transcription of Genes Involved in Cytochrome C Release"/>
</dbReference>
<dbReference type="BioGRID-ORCS" id="66494">
    <property type="hits" value="29 hits in 77 CRISPR screens"/>
</dbReference>
<dbReference type="ChiTaRS" id="Prelid1">
    <property type="organism name" value="mouse"/>
</dbReference>
<dbReference type="PRO" id="PR:Q8R107"/>
<dbReference type="Proteomes" id="UP000000589">
    <property type="component" value="Chromosome 13"/>
</dbReference>
<dbReference type="RNAct" id="Q8R107">
    <property type="molecule type" value="protein"/>
</dbReference>
<dbReference type="Bgee" id="ENSMUSG00000021486">
    <property type="expression patterns" value="Expressed in endothelial cell of lymphatic vessel and 254 other cell types or tissues"/>
</dbReference>
<dbReference type="GO" id="GO:0005758">
    <property type="term" value="C:mitochondrial intermembrane space"/>
    <property type="evidence" value="ECO:0000250"/>
    <property type="project" value="UniProtKB"/>
</dbReference>
<dbReference type="GO" id="GO:0005739">
    <property type="term" value="C:mitochondrion"/>
    <property type="evidence" value="ECO:0000314"/>
    <property type="project" value="UniProtKB"/>
</dbReference>
<dbReference type="GO" id="GO:0005654">
    <property type="term" value="C:nucleoplasm"/>
    <property type="evidence" value="ECO:0007669"/>
    <property type="project" value="Ensembl"/>
</dbReference>
<dbReference type="GO" id="GO:0032991">
    <property type="term" value="C:protein-containing complex"/>
    <property type="evidence" value="ECO:0000250"/>
    <property type="project" value="UniProtKB"/>
</dbReference>
<dbReference type="GO" id="GO:1990050">
    <property type="term" value="F:phosphatidic acid transfer activity"/>
    <property type="evidence" value="ECO:0007669"/>
    <property type="project" value="Ensembl"/>
</dbReference>
<dbReference type="GO" id="GO:0006915">
    <property type="term" value="P:apoptotic process"/>
    <property type="evidence" value="ECO:0007669"/>
    <property type="project" value="UniProtKB-KW"/>
</dbReference>
<dbReference type="GO" id="GO:0043066">
    <property type="term" value="P:negative regulation of apoptotic process"/>
    <property type="evidence" value="ECO:0000315"/>
    <property type="project" value="UniProtKB"/>
</dbReference>
<dbReference type="GO" id="GO:0010917">
    <property type="term" value="P:negative regulation of mitochondrial membrane potential"/>
    <property type="evidence" value="ECO:0000250"/>
    <property type="project" value="UniProtKB"/>
</dbReference>
<dbReference type="GO" id="GO:0090201">
    <property type="term" value="P:negative regulation of release of cytochrome c from mitochondria"/>
    <property type="evidence" value="ECO:0000250"/>
    <property type="project" value="UniProtKB"/>
</dbReference>
<dbReference type="GO" id="GO:1901857">
    <property type="term" value="P:positive regulation of cellular respiration"/>
    <property type="evidence" value="ECO:0000250"/>
    <property type="project" value="UniProtKB"/>
</dbReference>
<dbReference type="GO" id="GO:0010950">
    <property type="term" value="P:positive regulation of endopeptidase activity"/>
    <property type="evidence" value="ECO:0000250"/>
    <property type="project" value="UniProtKB"/>
</dbReference>
<dbReference type="GO" id="GO:2001140">
    <property type="term" value="P:positive regulation of phospholipid transport"/>
    <property type="evidence" value="ECO:0000250"/>
    <property type="project" value="UniProtKB"/>
</dbReference>
<dbReference type="GO" id="GO:0070234">
    <property type="term" value="P:positive regulation of T cell apoptotic process"/>
    <property type="evidence" value="ECO:0000250"/>
    <property type="project" value="UniProtKB"/>
</dbReference>
<dbReference type="GO" id="GO:0097035">
    <property type="term" value="P:regulation of membrane lipid distribution"/>
    <property type="evidence" value="ECO:0000250"/>
    <property type="project" value="UniProtKB"/>
</dbReference>
<dbReference type="GO" id="GO:0051881">
    <property type="term" value="P:regulation of mitochondrial membrane potential"/>
    <property type="evidence" value="ECO:0000250"/>
    <property type="project" value="UniProtKB"/>
</dbReference>
<dbReference type="GO" id="GO:0045580">
    <property type="term" value="P:regulation of T cell differentiation"/>
    <property type="evidence" value="ECO:0000250"/>
    <property type="project" value="UniProtKB"/>
</dbReference>
<dbReference type="InterPro" id="IPR006797">
    <property type="entry name" value="PRELI/MSF1_dom"/>
</dbReference>
<dbReference type="InterPro" id="IPR037365">
    <property type="entry name" value="Slowmo/Ups"/>
</dbReference>
<dbReference type="PANTHER" id="PTHR11158">
    <property type="entry name" value="MSF1/PX19 RELATED"/>
    <property type="match status" value="1"/>
</dbReference>
<dbReference type="Pfam" id="PF04707">
    <property type="entry name" value="PRELI"/>
    <property type="match status" value="1"/>
</dbReference>
<dbReference type="PROSITE" id="PS50904">
    <property type="entry name" value="PRELI_MSF1"/>
    <property type="match status" value="1"/>
</dbReference>
<accession>Q8R107</accession>
<accession>Q3UCN0</accession>
<accession>Q4QQJ9</accession>
<accession>Q6PCZ5</accession>
<accession>Q78IE2</accession>
<accession>Q9D1F7</accession>